<proteinExistence type="evidence at protein level"/>
<organism>
    <name type="scientific">Influenza B virus (strain B/Panama/45/1990)</name>
    <dbReference type="NCBI Taxonomy" id="408929"/>
    <lineage>
        <taxon>Viruses</taxon>
        <taxon>Riboviria</taxon>
        <taxon>Orthornavirae</taxon>
        <taxon>Negarnaviricota</taxon>
        <taxon>Polyploviricotina</taxon>
        <taxon>Insthoviricetes</taxon>
        <taxon>Articulavirales</taxon>
        <taxon>Orthomyxoviridae</taxon>
        <taxon>Betainfluenzavirus</taxon>
        <taxon>Betainfluenzavirus influenzae</taxon>
        <taxon>Influenza B virus</taxon>
    </lineage>
</organism>
<organismHost>
    <name type="scientific">Homo sapiens</name>
    <name type="common">Human</name>
    <dbReference type="NCBI Taxonomy" id="9606"/>
</organismHost>
<name>PA_INBP9</name>
<protein>
    <recommendedName>
        <fullName evidence="1">Polymerase acidic protein</fullName>
        <ecNumber evidence="1">3.1.-.-</ecNumber>
    </recommendedName>
    <alternativeName>
        <fullName evidence="1">RNA-directed RNA polymerase subunit P2</fullName>
    </alternativeName>
</protein>
<reference key="1">
    <citation type="journal article" date="1997" name="Virology">
        <title>The three subunits of the polymerase and the nucleoprotein of influenza B virus are the minimum set of viral proteins required for expression of a model RNA template.</title>
        <authorList>
            <person name="Jambrina E."/>
            <person name="Barcena J."/>
            <person name="Uez O."/>
            <person name="Portela A."/>
        </authorList>
    </citation>
    <scope>NUCLEOTIDE SEQUENCE [MRNA]</scope>
</reference>
<comment type="function">
    <text evidence="1">Plays an essential role in viral RNA transcription and replication by forming the heterotrimeric polymerase complex together with PB1 and PB2 subunits. The complex transcribes viral mRNAs by using a unique mechanism called cap-snatching. It consists in the hijacking and cleavage of host capped pre-mRNAs. These short capped RNAs are then used as primers for viral mRNAs. The PB2 subunit is responsible for the binding of the 5' cap of cellular pre-mRNAs which are subsequently cleaved after 10-13 nucleotides by the PA subunit that carries the endonuclease activity.</text>
</comment>
<comment type="cofactor">
    <cofactor evidence="1">
        <name>Mn(2+)</name>
        <dbReference type="ChEBI" id="CHEBI:29035"/>
    </cofactor>
    <text evidence="1">Binds 2 manganese ions per subunit.</text>
</comment>
<comment type="subunit">
    <text evidence="1">Influenza RNA polymerase is composed of three subunits: PB1, PB2 and PA. Interacts (via C-terminus) with PB1 (via N-terminus).</text>
</comment>
<comment type="subcellular location">
    <subcellularLocation>
        <location evidence="1">Host cytoplasm</location>
    </subcellularLocation>
    <subcellularLocation>
        <location evidence="1">Host nucleus</location>
    </subcellularLocation>
    <text evidence="1">PB1 and PA are transported in the host nucleus as a complex.</text>
</comment>
<comment type="alternative products">
    <event type="ribosomal frameshifting"/>
    <isoform>
        <id>O36432-1</id>
        <name>PA</name>
        <sequence type="displayed"/>
    </isoform>
    <isoform>
        <id>O36432-2</id>
        <name>PA-X</name>
        <sequence type="not described"/>
    </isoform>
</comment>
<comment type="PTM">
    <text evidence="1">Phosphorylated on serines and threonines by host kinases, including human casein kinase II.</text>
</comment>
<comment type="similarity">
    <text evidence="1">Belongs to the influenza viruses PA family.</text>
</comment>
<keyword id="KW-0002">3D-structure</keyword>
<keyword id="KW-1157">Cap snatching</keyword>
<keyword id="KW-0255">Endonuclease</keyword>
<keyword id="KW-1262">Eukaryotic host gene expression shutoff by virus</keyword>
<keyword id="KW-1191">Eukaryotic host transcription shutoff by virus</keyword>
<keyword id="KW-1035">Host cytoplasm</keyword>
<keyword id="KW-1190">Host gene expression shutoff by virus</keyword>
<keyword id="KW-1048">Host nucleus</keyword>
<keyword id="KW-0945">Host-virus interaction</keyword>
<keyword id="KW-0378">Hydrolase</keyword>
<keyword id="KW-1104">Inhibition of host RNA polymerase II by virus</keyword>
<keyword id="KW-0464">Manganese</keyword>
<keyword id="KW-0479">Metal-binding</keyword>
<keyword id="KW-0540">Nuclease</keyword>
<keyword id="KW-0597">Phosphoprotein</keyword>
<keyword id="KW-0688">Ribosomal frameshifting</keyword>
<gene>
    <name evidence="1" type="primary">PA</name>
</gene>
<sequence length="726" mass="83062">MDTFITRNFQTTIIQKAKNTMAEFSEDPELQPAMLFNICVHLEVCYVISDMNFLDEEGKSYTALEGQGKEQNLRPQYEVIEGMPRTIAWMVQRSLAQEHGIETPKYLADLFDYKTKRFIEVGITKGLADDYFWKKKEKLGNSMELMIFSYNQDYSLSNESSLDEEGKGRVLSRLTELQAELSLKNLWQVLIGEEDVEKGIDFKLGQTISRLRDISVPAGFSNFEGMRSYIDNIDPKGAIERNLARMSPLVSATPKKLKWEDLRPIGPHIYNHELPEVPYNAFLLMSDELGLANMTEGKSKKPKTLAKECLEKYSTLRDQTDPILIMKSEKANENFLWKLWRDCVNTISNEEMSNELQKTNYAKWATGDGLTYQKIMKEVAIDDETMCQEEPKIPNKCRVAAWVQTEMNLLSTLTSKRALDLPEIGPDVAPVEHVGSERRKYFVNEINYCKASTVMMKYVLFHTSLLNESNASMGKYKVIPITNRVVNEKGESFDMLYGLAVKGQSHLRGDTDVVTVVTFEFSSTDPRVDSGKWPKYTVFRIGSLFVSGREKSVYLYCRVNGTNKIQMKWGMEARRCLLQSMQQMEAIVEQESSIQGYDMTKACFKGDRVNSPKTFSIGTQEGKLVKGSFGKALRVIFTKCLMHYVFGNAQLEGFSAESRRLLLLIQALKDRKGPWVFDLEGMYSGIEECISNNPWVIQSAYWFNEWLGFEKEGSKVLESVDEIMDE</sequence>
<evidence type="ECO:0000255" key="1">
    <source>
        <dbReference type="HAMAP-Rule" id="MF_04063"/>
    </source>
</evidence>
<dbReference type="EC" id="3.1.-.-" evidence="1"/>
<dbReference type="EMBL" id="AF005738">
    <property type="protein sequence ID" value="AAB72045.1"/>
    <property type="molecule type" value="mRNA"/>
</dbReference>
<dbReference type="PDB" id="6QWL">
    <property type="method" value="EM"/>
    <property type="resolution" value="4.10 A"/>
    <property type="chains" value="E=1-726"/>
</dbReference>
<dbReference type="PDBsum" id="6QWL"/>
<dbReference type="EMDB" id="EMD-4660"/>
<dbReference type="SMR" id="O36432"/>
<dbReference type="IntAct" id="O36432">
    <property type="interactions" value="3"/>
</dbReference>
<dbReference type="GO" id="GO:0030430">
    <property type="term" value="C:host cell cytoplasm"/>
    <property type="evidence" value="ECO:0007669"/>
    <property type="project" value="UniProtKB-SubCell"/>
</dbReference>
<dbReference type="GO" id="GO:0042025">
    <property type="term" value="C:host cell nucleus"/>
    <property type="evidence" value="ECO:0007669"/>
    <property type="project" value="UniProtKB-SubCell"/>
</dbReference>
<dbReference type="GO" id="GO:0004519">
    <property type="term" value="F:endonuclease activity"/>
    <property type="evidence" value="ECO:0007669"/>
    <property type="project" value="UniProtKB-KW"/>
</dbReference>
<dbReference type="GO" id="GO:0046872">
    <property type="term" value="F:metal ion binding"/>
    <property type="evidence" value="ECO:0007669"/>
    <property type="project" value="UniProtKB-KW"/>
</dbReference>
<dbReference type="GO" id="GO:0003723">
    <property type="term" value="F:RNA binding"/>
    <property type="evidence" value="ECO:0007669"/>
    <property type="project" value="UniProtKB-UniRule"/>
</dbReference>
<dbReference type="GO" id="GO:0075526">
    <property type="term" value="P:cap snatching"/>
    <property type="evidence" value="ECO:0007669"/>
    <property type="project" value="UniProtKB-UniRule"/>
</dbReference>
<dbReference type="GO" id="GO:0006351">
    <property type="term" value="P:DNA-templated transcription"/>
    <property type="evidence" value="ECO:0007669"/>
    <property type="project" value="UniProtKB-UniRule"/>
</dbReference>
<dbReference type="GO" id="GO:0039657">
    <property type="term" value="P:symbiont-mediated suppression of host gene expression"/>
    <property type="evidence" value="ECO:0007669"/>
    <property type="project" value="UniProtKB-KW"/>
</dbReference>
<dbReference type="GO" id="GO:0039523">
    <property type="term" value="P:symbiont-mediated suppression of host mRNA transcription via inhibition of RNA polymerase II activity"/>
    <property type="evidence" value="ECO:0007669"/>
    <property type="project" value="UniProtKB-UniRule"/>
</dbReference>
<dbReference type="GO" id="GO:0039694">
    <property type="term" value="P:viral RNA genome replication"/>
    <property type="evidence" value="ECO:0007669"/>
    <property type="project" value="InterPro"/>
</dbReference>
<dbReference type="GO" id="GO:0075523">
    <property type="term" value="P:viral translational frameshifting"/>
    <property type="evidence" value="ECO:0007669"/>
    <property type="project" value="UniProtKB-KW"/>
</dbReference>
<dbReference type="Gene3D" id="3.40.91.90">
    <property type="entry name" value="Influenza RNA-dependent RNA polymerase subunit PA, endonuclease domain"/>
    <property type="match status" value="1"/>
</dbReference>
<dbReference type="HAMAP" id="MF_04063">
    <property type="entry name" value="INFV_PA"/>
    <property type="match status" value="1"/>
</dbReference>
<dbReference type="InterPro" id="IPR037534">
    <property type="entry name" value="INFV_PA"/>
</dbReference>
<dbReference type="InterPro" id="IPR001009">
    <property type="entry name" value="PA/PA-X"/>
</dbReference>
<dbReference type="InterPro" id="IPR038372">
    <property type="entry name" value="PA/PA-X_sf"/>
</dbReference>
<dbReference type="Pfam" id="PF00603">
    <property type="entry name" value="Flu_PA"/>
    <property type="match status" value="1"/>
</dbReference>
<accession>O36432</accession>
<feature type="chain" id="PRO_0000078809" description="Polymerase acidic protein">
    <location>
        <begin position="1"/>
        <end position="726"/>
    </location>
</feature>
<feature type="short sequence motif" description="Nuclear localization signal 1 (NLS1)" evidence="1">
    <location>
        <begin position="125"/>
        <end position="140"/>
    </location>
</feature>
<feature type="short sequence motif" description="Nuclear localization signal 2 (NLS2)" evidence="1">
    <location>
        <begin position="183"/>
        <end position="244"/>
    </location>
</feature>
<feature type="binding site" evidence="1">
    <location>
        <position position="41"/>
    </location>
    <ligand>
        <name>Mn(2+)</name>
        <dbReference type="ChEBI" id="CHEBI:29035"/>
        <label>1</label>
    </ligand>
</feature>
<feature type="binding site" evidence="1">
    <location>
        <position position="81"/>
    </location>
    <ligand>
        <name>Mn(2+)</name>
        <dbReference type="ChEBI" id="CHEBI:29035"/>
        <label>2</label>
    </ligand>
</feature>
<feature type="binding site" evidence="1">
    <location>
        <position position="109"/>
    </location>
    <ligand>
        <name>Mn(2+)</name>
        <dbReference type="ChEBI" id="CHEBI:29035"/>
        <label>1</label>
    </ligand>
</feature>
<feature type="binding site" evidence="1">
    <location>
        <position position="109"/>
    </location>
    <ligand>
        <name>Mn(2+)</name>
        <dbReference type="ChEBI" id="CHEBI:29035"/>
        <label>2</label>
    </ligand>
</feature>
<feature type="binding site" evidence="1">
    <location>
        <position position="120"/>
    </location>
    <ligand>
        <name>Mn(2+)</name>
        <dbReference type="ChEBI" id="CHEBI:29035"/>
        <label>1</label>
    </ligand>
</feature>
<feature type="binding site" evidence="1">
    <location>
        <position position="121"/>
    </location>
    <ligand>
        <name>Mn(2+)</name>
        <dbReference type="ChEBI" id="CHEBI:29035"/>
        <label>1</label>
    </ligand>
</feature>